<comment type="function">
    <text evidence="1">Mutarotase converts alpha-aldose to the beta-anomer. It is active on D-glucose, L-arabinose, D-xylose, D-galactose, maltose and lactose (By similarity).</text>
</comment>
<comment type="catalytic activity">
    <reaction evidence="2">
        <text>alpha-D-glucose = beta-D-glucose</text>
        <dbReference type="Rhea" id="RHEA:10264"/>
        <dbReference type="ChEBI" id="CHEBI:15903"/>
        <dbReference type="ChEBI" id="CHEBI:17925"/>
        <dbReference type="EC" id="5.1.3.3"/>
    </reaction>
</comment>
<comment type="pathway">
    <text>Carbohydrate metabolism; hexose metabolism.</text>
</comment>
<comment type="similarity">
    <text evidence="3">Belongs to the aldose epimerase family.</text>
</comment>
<gene>
    <name type="primary">galM</name>
</gene>
<sequence length="129" mass="14441">MKTSFNKYGRKDGKDLCEIVLENDHGMIVKVLNYGATLEKVLLNDENMILSLNSPADYSQERNYLGGTVGRIAGRVRKGQWRHGLETHQLPINDGENHIHGGIGTDTEVWDFKPSCSENSARVDLTLLD</sequence>
<dbReference type="EC" id="5.1.3.3"/>
<dbReference type="EMBL" id="X57248">
    <property type="protein sequence ID" value="CAA40527.1"/>
    <property type="molecule type" value="Genomic_DNA"/>
</dbReference>
<dbReference type="PIR" id="C47032">
    <property type="entry name" value="C47032"/>
</dbReference>
<dbReference type="SMR" id="Q00053"/>
<dbReference type="eggNOG" id="COG2017">
    <property type="taxonomic scope" value="Bacteria"/>
</dbReference>
<dbReference type="UniPathway" id="UPA00242"/>
<dbReference type="GO" id="GO:0004034">
    <property type="term" value="F:aldose 1-epimerase activity"/>
    <property type="evidence" value="ECO:0007669"/>
    <property type="project" value="UniProtKB-EC"/>
</dbReference>
<dbReference type="GO" id="GO:0030246">
    <property type="term" value="F:carbohydrate binding"/>
    <property type="evidence" value="ECO:0007669"/>
    <property type="project" value="InterPro"/>
</dbReference>
<dbReference type="GO" id="GO:0033499">
    <property type="term" value="P:galactose catabolic process via UDP-galactose, Leloir pathway"/>
    <property type="evidence" value="ECO:0007669"/>
    <property type="project" value="TreeGrafter"/>
</dbReference>
<dbReference type="GO" id="GO:0006006">
    <property type="term" value="P:glucose metabolic process"/>
    <property type="evidence" value="ECO:0007669"/>
    <property type="project" value="TreeGrafter"/>
</dbReference>
<dbReference type="Gene3D" id="2.70.98.10">
    <property type="match status" value="1"/>
</dbReference>
<dbReference type="InterPro" id="IPR008183">
    <property type="entry name" value="Aldose_1/G6P_1-epimerase"/>
</dbReference>
<dbReference type="InterPro" id="IPR011013">
    <property type="entry name" value="Gal_mutarotase_sf_dom"/>
</dbReference>
<dbReference type="InterPro" id="IPR014718">
    <property type="entry name" value="GH-type_carb-bd"/>
</dbReference>
<dbReference type="PANTHER" id="PTHR10091">
    <property type="entry name" value="ALDOSE-1-EPIMERASE"/>
    <property type="match status" value="1"/>
</dbReference>
<dbReference type="PANTHER" id="PTHR10091:SF0">
    <property type="entry name" value="GALACTOSE MUTAROTASE"/>
    <property type="match status" value="1"/>
</dbReference>
<dbReference type="Pfam" id="PF01263">
    <property type="entry name" value="Aldose_epim"/>
    <property type="match status" value="1"/>
</dbReference>
<dbReference type="SUPFAM" id="SSF74650">
    <property type="entry name" value="Galactose mutarotase-like"/>
    <property type="match status" value="1"/>
</dbReference>
<name>GALM_LACHE</name>
<reference key="1">
    <citation type="journal article" date="1991" name="J. Bacteriol.">
        <title>Galactose utilization in Lactobacillus helveticus: isolation and characterization of the galactokinase (galK) and galactose-1-phosphate uridyl transferase (galT) genes.</title>
        <authorList>
            <person name="Mollet B."/>
            <person name="Pilloud N."/>
        </authorList>
    </citation>
    <scope>NUCLEOTIDE SEQUENCE [GENOMIC DNA]</scope>
    <source>
        <strain>ATCC 15009 / DSM 20075 / BCRC 12936 / JCM 1120 / NBRC 15019 / NCIMB 11971 / NRRL B-4526 / Lh12</strain>
    </source>
</reference>
<proteinExistence type="inferred from homology"/>
<evidence type="ECO:0000250" key="1"/>
<evidence type="ECO:0000255" key="2">
    <source>
        <dbReference type="PROSITE-ProRule" id="PRU10126"/>
    </source>
</evidence>
<evidence type="ECO:0000305" key="3"/>
<accession>Q00053</accession>
<protein>
    <recommendedName>
        <fullName>Aldose 1-epimerase</fullName>
        <ecNumber>5.1.3.3</ecNumber>
    </recommendedName>
    <alternativeName>
        <fullName>Galactose mutarotase</fullName>
    </alternativeName>
    <alternativeName>
        <fullName>Type-1 mutarotase</fullName>
    </alternativeName>
</protein>
<organism>
    <name type="scientific">Lactobacillus helveticus</name>
    <name type="common">Lactobacillus suntoryeus</name>
    <dbReference type="NCBI Taxonomy" id="1587"/>
    <lineage>
        <taxon>Bacteria</taxon>
        <taxon>Bacillati</taxon>
        <taxon>Bacillota</taxon>
        <taxon>Bacilli</taxon>
        <taxon>Lactobacillales</taxon>
        <taxon>Lactobacillaceae</taxon>
        <taxon>Lactobacillus</taxon>
    </lineage>
</organism>
<feature type="chain" id="PRO_0000197446" description="Aldose 1-epimerase">
    <location>
        <begin position="1"/>
        <end position="129" status="greater than"/>
    </location>
</feature>
<feature type="non-terminal residue">
    <location>
        <position position="129"/>
    </location>
</feature>
<keyword id="KW-0119">Carbohydrate metabolism</keyword>
<keyword id="KW-0413">Isomerase</keyword>